<comment type="function">
    <text evidence="6">Dual chitinase/transglycosylase that plays a role in cell wall architecture (PubMed:30971696). Chitinase and transglycosylase activities are coupled (PubMed:30971696). Required for the polysaccharide cross-linking at the septa and the cell wall (PubMed:30971696). More specifically, transfers chitin to 1,6-beta-glucan in the cell wall (PubMed:30971696).</text>
</comment>
<comment type="catalytic activity">
    <reaction evidence="9">
        <text>Random endo-hydrolysis of N-acetyl-beta-D-glucosaminide (1-&gt;4)-beta-linkages in chitin and chitodextrins.</text>
        <dbReference type="EC" id="3.2.1.14"/>
    </reaction>
</comment>
<comment type="subcellular location">
    <subcellularLocation>
        <location evidence="3">Cell membrane</location>
        <topology evidence="3">Lipid-anchor</topology>
        <topology evidence="3">GPI-anchor</topology>
    </subcellularLocation>
    <subcellularLocation>
        <location evidence="8">Secreted</location>
        <location evidence="8">Cell wall</location>
    </subcellularLocation>
</comment>
<comment type="PTM">
    <text evidence="8">The GPI-like anchor contains a phosphoceramide lipid group. The anchor position has not been determined.</text>
</comment>
<comment type="disruption phenotype">
    <text evidence="6">Does not affect growth rate, germination or sporulation and displays only minor sensitivity to high concentrations of Congo Red, even when all crh family members are deleted.</text>
</comment>
<comment type="similarity">
    <text evidence="8">Belongs to the glycosyl hydrolase 16 family. CRH1 subfamily.</text>
</comment>
<accession>Q4WD22</accession>
<feature type="signal peptide" evidence="3">
    <location>
        <begin position="1"/>
        <end position="17"/>
    </location>
</feature>
<feature type="chain" id="PRO_5004246145" description="Crh-like protein 1" evidence="3">
    <location>
        <begin position="18"/>
        <end position="326"/>
    </location>
</feature>
<feature type="propeptide" id="PRO_0000462226" description="Removed in mature form" evidence="3">
    <location>
        <begin position="327"/>
        <end position="357"/>
    </location>
</feature>
<feature type="transmembrane region" description="Helical" evidence="3">
    <location>
        <begin position="337"/>
        <end position="357"/>
    </location>
</feature>
<feature type="domain" description="GH16" evidence="5">
    <location>
        <begin position="20"/>
        <end position="220"/>
    </location>
</feature>
<feature type="active site" description="Nucleophile" evidence="1">
    <location>
        <position position="109"/>
    </location>
</feature>
<feature type="active site" description="Proton donor" evidence="1">
    <location>
        <position position="113"/>
    </location>
</feature>
<feature type="binding site" evidence="2">
    <location>
        <position position="113"/>
    </location>
    <ligand>
        <name>chitin</name>
        <dbReference type="ChEBI" id="CHEBI:17029"/>
    </ligand>
</feature>
<feature type="binding site" evidence="2">
    <location>
        <position position="193"/>
    </location>
    <ligand>
        <name>chitin</name>
        <dbReference type="ChEBI" id="CHEBI:17029"/>
    </ligand>
</feature>
<feature type="binding site" evidence="2">
    <location>
        <position position="197"/>
    </location>
    <ligand>
        <name>chitin</name>
        <dbReference type="ChEBI" id="CHEBI:17029"/>
    </ligand>
</feature>
<feature type="binding site" evidence="2">
    <location>
        <position position="208"/>
    </location>
    <ligand>
        <name>chitin</name>
        <dbReference type="ChEBI" id="CHEBI:17029"/>
    </ligand>
</feature>
<feature type="lipid moiety-binding region" description="GPI-anchor amidated glycine" evidence="3">
    <location>
        <position position="326"/>
    </location>
</feature>
<feature type="glycosylation site" description="N-linked (GlcNAc...) asparagine" evidence="4">
    <location>
        <position position="52"/>
    </location>
</feature>
<feature type="glycosylation site" description="N-linked (GlcNAc...) asparagine" evidence="4">
    <location>
        <position position="92"/>
    </location>
</feature>
<feature type="glycosylation site" description="N-linked (GlcNAc...) asparagine" evidence="4">
    <location>
        <position position="131"/>
    </location>
</feature>
<feature type="glycosylation site" description="N-linked (GlcNAc...) asparagine" evidence="4">
    <location>
        <position position="242"/>
    </location>
</feature>
<feature type="glycosylation site" description="N-linked (GlcNAc...) asparagine" evidence="4">
    <location>
        <position position="257"/>
    </location>
</feature>
<reference key="1">
    <citation type="journal article" date="2005" name="Nature">
        <title>Genomic sequence of the pathogenic and allergenic filamentous fungus Aspergillus fumigatus.</title>
        <authorList>
            <person name="Nierman W.C."/>
            <person name="Pain A."/>
            <person name="Anderson M.J."/>
            <person name="Wortman J.R."/>
            <person name="Kim H.S."/>
            <person name="Arroyo J."/>
            <person name="Berriman M."/>
            <person name="Abe K."/>
            <person name="Archer D.B."/>
            <person name="Bermejo C."/>
            <person name="Bennett J.W."/>
            <person name="Bowyer P."/>
            <person name="Chen D."/>
            <person name="Collins M."/>
            <person name="Coulsen R."/>
            <person name="Davies R."/>
            <person name="Dyer P.S."/>
            <person name="Farman M.L."/>
            <person name="Fedorova N."/>
            <person name="Fedorova N.D."/>
            <person name="Feldblyum T.V."/>
            <person name="Fischer R."/>
            <person name="Fosker N."/>
            <person name="Fraser A."/>
            <person name="Garcia J.L."/>
            <person name="Garcia M.J."/>
            <person name="Goble A."/>
            <person name="Goldman G.H."/>
            <person name="Gomi K."/>
            <person name="Griffith-Jones S."/>
            <person name="Gwilliam R."/>
            <person name="Haas B.J."/>
            <person name="Haas H."/>
            <person name="Harris D.E."/>
            <person name="Horiuchi H."/>
            <person name="Huang J."/>
            <person name="Humphray S."/>
            <person name="Jimenez J."/>
            <person name="Keller N."/>
            <person name="Khouri H."/>
            <person name="Kitamoto K."/>
            <person name="Kobayashi T."/>
            <person name="Konzack S."/>
            <person name="Kulkarni R."/>
            <person name="Kumagai T."/>
            <person name="Lafton A."/>
            <person name="Latge J.-P."/>
            <person name="Li W."/>
            <person name="Lord A."/>
            <person name="Lu C."/>
            <person name="Majoros W.H."/>
            <person name="May G.S."/>
            <person name="Miller B.L."/>
            <person name="Mohamoud Y."/>
            <person name="Molina M."/>
            <person name="Monod M."/>
            <person name="Mouyna I."/>
            <person name="Mulligan S."/>
            <person name="Murphy L.D."/>
            <person name="O'Neil S."/>
            <person name="Paulsen I."/>
            <person name="Penalva M.A."/>
            <person name="Pertea M."/>
            <person name="Price C."/>
            <person name="Pritchard B.L."/>
            <person name="Quail M.A."/>
            <person name="Rabbinowitsch E."/>
            <person name="Rawlins N."/>
            <person name="Rajandream M.A."/>
            <person name="Reichard U."/>
            <person name="Renauld H."/>
            <person name="Robson G.D."/>
            <person name="Rodriguez de Cordoba S."/>
            <person name="Rodriguez-Pena J.M."/>
            <person name="Ronning C.M."/>
            <person name="Rutter S."/>
            <person name="Salzberg S.L."/>
            <person name="Sanchez M."/>
            <person name="Sanchez-Ferrero J.C."/>
            <person name="Saunders D."/>
            <person name="Seeger K."/>
            <person name="Squares R."/>
            <person name="Squares S."/>
            <person name="Takeuchi M."/>
            <person name="Tekaia F."/>
            <person name="Turner G."/>
            <person name="Vazquez de Aldana C.R."/>
            <person name="Weidman J."/>
            <person name="White O."/>
            <person name="Woodward J.R."/>
            <person name="Yu J.-H."/>
            <person name="Fraser C.M."/>
            <person name="Galagan J.E."/>
            <person name="Asai K."/>
            <person name="Machida M."/>
            <person name="Hall N."/>
            <person name="Barrell B.G."/>
            <person name="Denning D.W."/>
        </authorList>
    </citation>
    <scope>NUCLEOTIDE SEQUENCE [LARGE SCALE GENOMIC DNA]</scope>
    <source>
        <strain>ATCC MYA-4609 / CBS 101355 / FGSC A1100 / Af293</strain>
    </source>
</reference>
<reference key="2">
    <citation type="journal article" date="2019" name="Nat. Commun.">
        <title>Mechanisms of redundancy and specificity of the Aspergillus fumigatus Crh transglycosylases.</title>
        <authorList>
            <person name="Fang W."/>
            <person name="Sanz A.B."/>
            <person name="Bartual S.G."/>
            <person name="Wang B."/>
            <person name="Ferenbach A.T."/>
            <person name="Farkas V."/>
            <person name="Hurtado-Guerrero R."/>
            <person name="Arroyo J."/>
            <person name="van Aalten D.M.F."/>
        </authorList>
    </citation>
    <scope>FUNCTION</scope>
    <scope>DISRUPTION PHENOTYPE</scope>
</reference>
<organism>
    <name type="scientific">Aspergillus fumigatus (strain ATCC MYA-4609 / CBS 101355 / FGSC A1100 / Af293)</name>
    <name type="common">Neosartorya fumigata</name>
    <dbReference type="NCBI Taxonomy" id="330879"/>
    <lineage>
        <taxon>Eukaryota</taxon>
        <taxon>Fungi</taxon>
        <taxon>Dikarya</taxon>
        <taxon>Ascomycota</taxon>
        <taxon>Pezizomycotina</taxon>
        <taxon>Eurotiomycetes</taxon>
        <taxon>Eurotiomycetidae</taxon>
        <taxon>Eurotiales</taxon>
        <taxon>Aspergillaceae</taxon>
        <taxon>Aspergillus</taxon>
        <taxon>Aspergillus subgen. Fumigati</taxon>
    </lineage>
</organism>
<gene>
    <name evidence="7" type="primary">crh1</name>
    <name type="ORF">AFUA_6G03230</name>
</gene>
<name>CRH1_ASPFU</name>
<proteinExistence type="inferred from homology"/>
<dbReference type="EC" id="3.2.1.14" evidence="9"/>
<dbReference type="EC" id="2.4.-.-" evidence="6"/>
<dbReference type="EMBL" id="AAHF01000012">
    <property type="protein sequence ID" value="EAL85716.1"/>
    <property type="molecule type" value="Genomic_DNA"/>
</dbReference>
<dbReference type="RefSeq" id="XP_747754.1">
    <property type="nucleotide sequence ID" value="XM_742661.1"/>
</dbReference>
<dbReference type="FunCoup" id="Q4WD22">
    <property type="interactions" value="18"/>
</dbReference>
<dbReference type="EnsemblFungi" id="EAL85716">
    <property type="protein sequence ID" value="EAL85716"/>
    <property type="gene ID" value="AFUA_6G03230"/>
</dbReference>
<dbReference type="GeneID" id="3505256"/>
<dbReference type="KEGG" id="afm:AFUA_6G03230"/>
<dbReference type="eggNOG" id="ENOG502QVQI">
    <property type="taxonomic scope" value="Eukaryota"/>
</dbReference>
<dbReference type="HOGENOM" id="CLU_027506_3_2_1"/>
<dbReference type="InParanoid" id="Q4WD22"/>
<dbReference type="OMA" id="DIINYNP"/>
<dbReference type="OrthoDB" id="4781at2759"/>
<dbReference type="Proteomes" id="UP000002530">
    <property type="component" value="Chromosome 6"/>
</dbReference>
<dbReference type="GO" id="GO:0005886">
    <property type="term" value="C:plasma membrane"/>
    <property type="evidence" value="ECO:0007669"/>
    <property type="project" value="UniProtKB-SubCell"/>
</dbReference>
<dbReference type="GO" id="GO:0098552">
    <property type="term" value="C:side of membrane"/>
    <property type="evidence" value="ECO:0007669"/>
    <property type="project" value="UniProtKB-KW"/>
</dbReference>
<dbReference type="GO" id="GO:0004553">
    <property type="term" value="F:hydrolase activity, hydrolyzing O-glycosyl compounds"/>
    <property type="evidence" value="ECO:0007669"/>
    <property type="project" value="UniProtKB-UniRule"/>
</dbReference>
<dbReference type="GO" id="GO:0005975">
    <property type="term" value="P:carbohydrate metabolic process"/>
    <property type="evidence" value="ECO:0007669"/>
    <property type="project" value="InterPro"/>
</dbReference>
<dbReference type="GO" id="GO:0071555">
    <property type="term" value="P:cell wall organization"/>
    <property type="evidence" value="ECO:0007669"/>
    <property type="project" value="InterPro"/>
</dbReference>
<dbReference type="CDD" id="cd02183">
    <property type="entry name" value="GH16_fungal_CRH1_transglycosylase"/>
    <property type="match status" value="1"/>
</dbReference>
<dbReference type="FunFam" id="2.60.120.200:FF:000152">
    <property type="entry name" value="Cell wall glucanase"/>
    <property type="match status" value="1"/>
</dbReference>
<dbReference type="Gene3D" id="2.60.120.200">
    <property type="match status" value="1"/>
</dbReference>
<dbReference type="InterPro" id="IPR013320">
    <property type="entry name" value="ConA-like_dom_sf"/>
</dbReference>
<dbReference type="InterPro" id="IPR000757">
    <property type="entry name" value="GH16"/>
</dbReference>
<dbReference type="InterPro" id="IPR017168">
    <property type="entry name" value="Glyco_hydro_16_CRH1_prd"/>
</dbReference>
<dbReference type="InterPro" id="IPR050546">
    <property type="entry name" value="Glycosyl_Hydrlase_16"/>
</dbReference>
<dbReference type="PANTHER" id="PTHR10963:SF27">
    <property type="entry name" value="GLYCOSIDASE-RELATED"/>
    <property type="match status" value="1"/>
</dbReference>
<dbReference type="PANTHER" id="PTHR10963">
    <property type="entry name" value="GLYCOSYL HYDROLASE-RELATED"/>
    <property type="match status" value="1"/>
</dbReference>
<dbReference type="Pfam" id="PF00722">
    <property type="entry name" value="Glyco_hydro_16"/>
    <property type="match status" value="1"/>
</dbReference>
<dbReference type="PIRSF" id="PIRSF037299">
    <property type="entry name" value="Glycosidase_CRH1_prd"/>
    <property type="match status" value="1"/>
</dbReference>
<dbReference type="SUPFAM" id="SSF49899">
    <property type="entry name" value="Concanavalin A-like lectins/glucanases"/>
    <property type="match status" value="1"/>
</dbReference>
<dbReference type="PROSITE" id="PS51762">
    <property type="entry name" value="GH16_2"/>
    <property type="match status" value="1"/>
</dbReference>
<sequence>MMLPLLAVSAFASLGAAQTYTSCNPTNSLKTWSLSTDFTQGSSDGWTAISGNVTYGSNGAEFTINKRYDAPTLETNFYIFFGEVEVVMRAANGTGIVSSIVMESDDLDEIDWECTGTDTTQIQTNYFGKGNTTTYDRAIWETVSSPQDEFHTYKVVWTAAAITWYIDGTAVRTLEYADAVDGKNYPQTPMVVKLGIWAGGDPSNSEGTIEWAGGETDYDEVPFTMYVKSVNIINYNPAASYNYTDKTGSYTSIVASNSTTGSGIHSSNSVSVFAPSSSTSTFTSSRALIATASTYPASVQTSSSGVVSLSSSSASSSSAAASSTSGSASAVFTGAAVTNLPSFFFTVFFALAIALAF</sequence>
<protein>
    <recommendedName>
        <fullName evidence="7">Crh-like protein 1</fullName>
    </recommendedName>
    <domain>
        <recommendedName>
            <fullName evidence="7">Chitinase crh1</fullName>
            <ecNumber evidence="9">3.2.1.14</ecNumber>
        </recommendedName>
    </domain>
    <domain>
        <recommendedName>
            <fullName evidence="7">Chitin transglycosylase crh1</fullName>
            <ecNumber evidence="6">2.4.-.-</ecNumber>
        </recommendedName>
    </domain>
</protein>
<keyword id="KW-1003">Cell membrane</keyword>
<keyword id="KW-0134">Cell wall</keyword>
<keyword id="KW-0961">Cell wall biogenesis/degradation</keyword>
<keyword id="KW-0325">Glycoprotein</keyword>
<keyword id="KW-0326">Glycosidase</keyword>
<keyword id="KW-0328">Glycosyltransferase</keyword>
<keyword id="KW-0336">GPI-anchor</keyword>
<keyword id="KW-0378">Hydrolase</keyword>
<keyword id="KW-0449">Lipoprotein</keyword>
<keyword id="KW-0472">Membrane</keyword>
<keyword id="KW-1185">Reference proteome</keyword>
<keyword id="KW-0964">Secreted</keyword>
<keyword id="KW-0732">Signal</keyword>
<keyword id="KW-0808">Transferase</keyword>
<keyword id="KW-0812">Transmembrane</keyword>
<keyword id="KW-1133">Transmembrane helix</keyword>
<evidence type="ECO:0000250" key="1">
    <source>
        <dbReference type="UniProtKB" id="P27051"/>
    </source>
</evidence>
<evidence type="ECO:0000250" key="2">
    <source>
        <dbReference type="UniProtKB" id="Q8J0P4"/>
    </source>
</evidence>
<evidence type="ECO:0000255" key="3"/>
<evidence type="ECO:0000255" key="4">
    <source>
        <dbReference type="PROSITE-ProRule" id="PRU00498"/>
    </source>
</evidence>
<evidence type="ECO:0000255" key="5">
    <source>
        <dbReference type="PROSITE-ProRule" id="PRU01098"/>
    </source>
</evidence>
<evidence type="ECO:0000269" key="6">
    <source>
    </source>
</evidence>
<evidence type="ECO:0000303" key="7">
    <source>
    </source>
</evidence>
<evidence type="ECO:0000305" key="8"/>
<evidence type="ECO:0000305" key="9">
    <source>
    </source>
</evidence>